<evidence type="ECO:0000255" key="1">
    <source>
        <dbReference type="HAMAP-Rule" id="MF_01031"/>
    </source>
</evidence>
<organism>
    <name type="scientific">Escherichia coli O157:H7 (strain EC4115 / EHEC)</name>
    <dbReference type="NCBI Taxonomy" id="444450"/>
    <lineage>
        <taxon>Bacteria</taxon>
        <taxon>Pseudomonadati</taxon>
        <taxon>Pseudomonadota</taxon>
        <taxon>Gammaproteobacteria</taxon>
        <taxon>Enterobacterales</taxon>
        <taxon>Enterobacteriaceae</taxon>
        <taxon>Escherichia</taxon>
    </lineage>
</organism>
<feature type="chain" id="PRO_1000135801" description="3-isopropylmalate dehydratase small subunit">
    <location>
        <begin position="1"/>
        <end position="201"/>
    </location>
</feature>
<dbReference type="EC" id="4.2.1.33" evidence="1"/>
<dbReference type="EMBL" id="CP001164">
    <property type="protein sequence ID" value="ACI36574.1"/>
    <property type="molecule type" value="Genomic_DNA"/>
</dbReference>
<dbReference type="RefSeq" id="WP_000818246.1">
    <property type="nucleotide sequence ID" value="NC_011353.1"/>
</dbReference>
<dbReference type="SMR" id="B5YZA7"/>
<dbReference type="KEGG" id="ecf:ECH74115_0078"/>
<dbReference type="HOGENOM" id="CLU_081378_0_3_6"/>
<dbReference type="UniPathway" id="UPA00048">
    <property type="reaction ID" value="UER00071"/>
</dbReference>
<dbReference type="GO" id="GO:0009316">
    <property type="term" value="C:3-isopropylmalate dehydratase complex"/>
    <property type="evidence" value="ECO:0007669"/>
    <property type="project" value="InterPro"/>
</dbReference>
<dbReference type="GO" id="GO:0003861">
    <property type="term" value="F:3-isopropylmalate dehydratase activity"/>
    <property type="evidence" value="ECO:0007669"/>
    <property type="project" value="UniProtKB-UniRule"/>
</dbReference>
<dbReference type="GO" id="GO:0009098">
    <property type="term" value="P:L-leucine biosynthetic process"/>
    <property type="evidence" value="ECO:0007669"/>
    <property type="project" value="UniProtKB-UniRule"/>
</dbReference>
<dbReference type="CDD" id="cd01577">
    <property type="entry name" value="IPMI_Swivel"/>
    <property type="match status" value="1"/>
</dbReference>
<dbReference type="FunFam" id="3.20.19.10:FF:000003">
    <property type="entry name" value="3-isopropylmalate dehydratase small subunit"/>
    <property type="match status" value="1"/>
</dbReference>
<dbReference type="Gene3D" id="3.20.19.10">
    <property type="entry name" value="Aconitase, domain 4"/>
    <property type="match status" value="1"/>
</dbReference>
<dbReference type="HAMAP" id="MF_01031">
    <property type="entry name" value="LeuD_type1"/>
    <property type="match status" value="1"/>
</dbReference>
<dbReference type="InterPro" id="IPR004431">
    <property type="entry name" value="3-IsopropMal_deHydase_ssu"/>
</dbReference>
<dbReference type="InterPro" id="IPR015928">
    <property type="entry name" value="Aconitase/3IPM_dehydase_swvl"/>
</dbReference>
<dbReference type="InterPro" id="IPR000573">
    <property type="entry name" value="AconitaseA/IPMdHydase_ssu_swvl"/>
</dbReference>
<dbReference type="InterPro" id="IPR033940">
    <property type="entry name" value="IPMI_Swivel"/>
</dbReference>
<dbReference type="InterPro" id="IPR050075">
    <property type="entry name" value="LeuD"/>
</dbReference>
<dbReference type="NCBIfam" id="TIGR00171">
    <property type="entry name" value="leuD"/>
    <property type="match status" value="1"/>
</dbReference>
<dbReference type="NCBIfam" id="NF002458">
    <property type="entry name" value="PRK01641.1"/>
    <property type="match status" value="1"/>
</dbReference>
<dbReference type="PANTHER" id="PTHR43345:SF5">
    <property type="entry name" value="3-ISOPROPYLMALATE DEHYDRATASE SMALL SUBUNIT"/>
    <property type="match status" value="1"/>
</dbReference>
<dbReference type="PANTHER" id="PTHR43345">
    <property type="entry name" value="3-ISOPROPYLMALATE DEHYDRATASE SMALL SUBUNIT 2-RELATED-RELATED"/>
    <property type="match status" value="1"/>
</dbReference>
<dbReference type="Pfam" id="PF00694">
    <property type="entry name" value="Aconitase_C"/>
    <property type="match status" value="1"/>
</dbReference>
<dbReference type="SUPFAM" id="SSF52016">
    <property type="entry name" value="LeuD/IlvD-like"/>
    <property type="match status" value="1"/>
</dbReference>
<protein>
    <recommendedName>
        <fullName evidence="1">3-isopropylmalate dehydratase small subunit</fullName>
        <ecNumber evidence="1">4.2.1.33</ecNumber>
    </recommendedName>
    <alternativeName>
        <fullName evidence="1">Alpha-IPM isomerase</fullName>
        <shortName evidence="1">IPMI</shortName>
    </alternativeName>
    <alternativeName>
        <fullName evidence="1">Isopropylmalate isomerase</fullName>
    </alternativeName>
</protein>
<sequence>MAEKFIKHTGLVVPLDAANVDTDAIIPKQFLQKVTRTGFGAHLFNDWRFLDEKGQQPNPDFVLNFSQYQGASILLARENFGCGSSREHAPWALTDYGFKVVIAPSFADIFYGNSFNNQLLPVKLSDAEVDELFALVKANPGIHFDVDLEAQEVKAGEKTYRFTIDAFRRHCMMNGLDSIGLTLQHDDAIAAYEAKQPAFMR</sequence>
<comment type="function">
    <text evidence="1">Catalyzes the isomerization between 2-isopropylmalate and 3-isopropylmalate, via the formation of 2-isopropylmaleate.</text>
</comment>
<comment type="catalytic activity">
    <reaction evidence="1">
        <text>(2R,3S)-3-isopropylmalate = (2S)-2-isopropylmalate</text>
        <dbReference type="Rhea" id="RHEA:32287"/>
        <dbReference type="ChEBI" id="CHEBI:1178"/>
        <dbReference type="ChEBI" id="CHEBI:35121"/>
        <dbReference type="EC" id="4.2.1.33"/>
    </reaction>
</comment>
<comment type="pathway">
    <text evidence="1">Amino-acid biosynthesis; L-leucine biosynthesis; L-leucine from 3-methyl-2-oxobutanoate: step 2/4.</text>
</comment>
<comment type="subunit">
    <text evidence="1">Heterodimer of LeuC and LeuD.</text>
</comment>
<comment type="similarity">
    <text evidence="1">Belongs to the LeuD family. LeuD type 1 subfamily.</text>
</comment>
<proteinExistence type="inferred from homology"/>
<accession>B5YZA7</accession>
<keyword id="KW-0028">Amino-acid biosynthesis</keyword>
<keyword id="KW-0100">Branched-chain amino acid biosynthesis</keyword>
<keyword id="KW-0432">Leucine biosynthesis</keyword>
<keyword id="KW-0456">Lyase</keyword>
<reference key="1">
    <citation type="journal article" date="2011" name="Proc. Natl. Acad. Sci. U.S.A.">
        <title>Genomic anatomy of Escherichia coli O157:H7 outbreaks.</title>
        <authorList>
            <person name="Eppinger M."/>
            <person name="Mammel M.K."/>
            <person name="Leclerc J.E."/>
            <person name="Ravel J."/>
            <person name="Cebula T.A."/>
        </authorList>
    </citation>
    <scope>NUCLEOTIDE SEQUENCE [LARGE SCALE GENOMIC DNA]</scope>
    <source>
        <strain>EC4115 / EHEC</strain>
    </source>
</reference>
<gene>
    <name evidence="1" type="primary">leuD</name>
    <name type="ordered locus">ECH74115_0078</name>
</gene>
<name>LEUD_ECO5E</name>